<comment type="function">
    <text evidence="1">Acts as an anti-CsrA protein, binds CsrA and prevents it from repressing translation of its target genes, one of which is flagellin. Binds to flagellin and participates in the assembly of the flagellum.</text>
</comment>
<comment type="subunit">
    <text evidence="1">Interacts with translational regulator CsrA and flagellin(s).</text>
</comment>
<comment type="subcellular location">
    <subcellularLocation>
        <location evidence="1">Cytoplasm</location>
    </subcellularLocation>
</comment>
<comment type="similarity">
    <text evidence="1">Belongs to the FliW family.</text>
</comment>
<gene>
    <name evidence="1" type="primary">fliW</name>
    <name type="ordered locus">CTN_0611</name>
</gene>
<feature type="chain" id="PRO_1000164472" description="Flagellar assembly factor FliW">
    <location>
        <begin position="1"/>
        <end position="149"/>
    </location>
</feature>
<protein>
    <recommendedName>
        <fullName evidence="1">Flagellar assembly factor FliW</fullName>
    </recommendedName>
</protein>
<keyword id="KW-1005">Bacterial flagellum biogenesis</keyword>
<keyword id="KW-0143">Chaperone</keyword>
<keyword id="KW-0963">Cytoplasm</keyword>
<keyword id="KW-0810">Translation regulation</keyword>
<organism>
    <name type="scientific">Thermotoga neapolitana (strain ATCC 49049 / DSM 4359 / NBRC 107923 / NS-E)</name>
    <dbReference type="NCBI Taxonomy" id="309803"/>
    <lineage>
        <taxon>Bacteria</taxon>
        <taxon>Thermotogati</taxon>
        <taxon>Thermotogota</taxon>
        <taxon>Thermotogae</taxon>
        <taxon>Thermotogales</taxon>
        <taxon>Thermotogaceae</taxon>
        <taxon>Thermotoga</taxon>
    </lineage>
</organism>
<sequence>MVYSTKLGEIEITDDQIFVFEEGIPGFEHLKKFALIFPEETFPIGWLLSLEDSHVGLPVVDPKLVRPDYDPVVPSEDLEKLGVSNQDELLFFCVLTIPPGKPEEATINLRAPIIIRQNTKKGMQVILENADYHLKHLLSEEMERAKSMV</sequence>
<proteinExistence type="inferred from homology"/>
<dbReference type="EMBL" id="CP000916">
    <property type="protein sequence ID" value="ACM22787.1"/>
    <property type="molecule type" value="Genomic_DNA"/>
</dbReference>
<dbReference type="RefSeq" id="WP_015919106.1">
    <property type="nucleotide sequence ID" value="NC_011978.1"/>
</dbReference>
<dbReference type="SMR" id="B9K754"/>
<dbReference type="STRING" id="309803.CTN_0611"/>
<dbReference type="KEGG" id="tna:CTN_0611"/>
<dbReference type="eggNOG" id="COG1699">
    <property type="taxonomic scope" value="Bacteria"/>
</dbReference>
<dbReference type="HOGENOM" id="CLU_112356_0_2_0"/>
<dbReference type="Proteomes" id="UP000000445">
    <property type="component" value="Chromosome"/>
</dbReference>
<dbReference type="GO" id="GO:0005737">
    <property type="term" value="C:cytoplasm"/>
    <property type="evidence" value="ECO:0007669"/>
    <property type="project" value="UniProtKB-SubCell"/>
</dbReference>
<dbReference type="GO" id="GO:0044780">
    <property type="term" value="P:bacterial-type flagellum assembly"/>
    <property type="evidence" value="ECO:0007669"/>
    <property type="project" value="UniProtKB-UniRule"/>
</dbReference>
<dbReference type="GO" id="GO:0006417">
    <property type="term" value="P:regulation of translation"/>
    <property type="evidence" value="ECO:0007669"/>
    <property type="project" value="UniProtKB-KW"/>
</dbReference>
<dbReference type="Gene3D" id="2.30.290.10">
    <property type="entry name" value="BH3618-like"/>
    <property type="match status" value="1"/>
</dbReference>
<dbReference type="HAMAP" id="MF_01185">
    <property type="entry name" value="FliW"/>
    <property type="match status" value="1"/>
</dbReference>
<dbReference type="InterPro" id="IPR003775">
    <property type="entry name" value="Flagellar_assembly_factor_FliW"/>
</dbReference>
<dbReference type="InterPro" id="IPR024046">
    <property type="entry name" value="Flagellar_assmbl_FliW_dom_sf"/>
</dbReference>
<dbReference type="NCBIfam" id="NF009793">
    <property type="entry name" value="PRK13285.1-1"/>
    <property type="match status" value="1"/>
</dbReference>
<dbReference type="PANTHER" id="PTHR39190">
    <property type="entry name" value="FLAGELLAR ASSEMBLY FACTOR FLIW"/>
    <property type="match status" value="1"/>
</dbReference>
<dbReference type="PANTHER" id="PTHR39190:SF1">
    <property type="entry name" value="FLAGELLAR ASSEMBLY FACTOR FLIW"/>
    <property type="match status" value="1"/>
</dbReference>
<dbReference type="Pfam" id="PF02623">
    <property type="entry name" value="FliW"/>
    <property type="match status" value="1"/>
</dbReference>
<dbReference type="SUPFAM" id="SSF141457">
    <property type="entry name" value="BH3618-like"/>
    <property type="match status" value="1"/>
</dbReference>
<evidence type="ECO:0000255" key="1">
    <source>
        <dbReference type="HAMAP-Rule" id="MF_01185"/>
    </source>
</evidence>
<name>FLIW_THENN</name>
<reference key="1">
    <citation type="submission" date="2007-11" db="EMBL/GenBank/DDBJ databases">
        <title>The genome sequence of the hyperthermophilic bacterium Thermotoga neapolitana.</title>
        <authorList>
            <person name="Lim S.K."/>
            <person name="Kim J.S."/>
            <person name="Cha S.H."/>
            <person name="Park B.C."/>
            <person name="Lee D.S."/>
            <person name="Tae H.S."/>
            <person name="Kim S.-J."/>
            <person name="Kim J.J."/>
            <person name="Park K.J."/>
            <person name="Lee S.Y."/>
        </authorList>
    </citation>
    <scope>NUCLEOTIDE SEQUENCE [LARGE SCALE GENOMIC DNA]</scope>
    <source>
        <strain>ATCC 49049 / DSM 4359 / NBRC 107923 / NS-E</strain>
    </source>
</reference>
<accession>B9K754</accession>